<reference key="1">
    <citation type="journal article" date="2005" name="Science">
        <title>The transcriptional landscape of the mammalian genome.</title>
        <authorList>
            <person name="Carninci P."/>
            <person name="Kasukawa T."/>
            <person name="Katayama S."/>
            <person name="Gough J."/>
            <person name="Frith M.C."/>
            <person name="Maeda N."/>
            <person name="Oyama R."/>
            <person name="Ravasi T."/>
            <person name="Lenhard B."/>
            <person name="Wells C."/>
            <person name="Kodzius R."/>
            <person name="Shimokawa K."/>
            <person name="Bajic V.B."/>
            <person name="Brenner S.E."/>
            <person name="Batalov S."/>
            <person name="Forrest A.R."/>
            <person name="Zavolan M."/>
            <person name="Davis M.J."/>
            <person name="Wilming L.G."/>
            <person name="Aidinis V."/>
            <person name="Allen J.E."/>
            <person name="Ambesi-Impiombato A."/>
            <person name="Apweiler R."/>
            <person name="Aturaliya R.N."/>
            <person name="Bailey T.L."/>
            <person name="Bansal M."/>
            <person name="Baxter L."/>
            <person name="Beisel K.W."/>
            <person name="Bersano T."/>
            <person name="Bono H."/>
            <person name="Chalk A.M."/>
            <person name="Chiu K.P."/>
            <person name="Choudhary V."/>
            <person name="Christoffels A."/>
            <person name="Clutterbuck D.R."/>
            <person name="Crowe M.L."/>
            <person name="Dalla E."/>
            <person name="Dalrymple B.P."/>
            <person name="de Bono B."/>
            <person name="Della Gatta G."/>
            <person name="di Bernardo D."/>
            <person name="Down T."/>
            <person name="Engstrom P."/>
            <person name="Fagiolini M."/>
            <person name="Faulkner G."/>
            <person name="Fletcher C.F."/>
            <person name="Fukushima T."/>
            <person name="Furuno M."/>
            <person name="Futaki S."/>
            <person name="Gariboldi M."/>
            <person name="Georgii-Hemming P."/>
            <person name="Gingeras T.R."/>
            <person name="Gojobori T."/>
            <person name="Green R.E."/>
            <person name="Gustincich S."/>
            <person name="Harbers M."/>
            <person name="Hayashi Y."/>
            <person name="Hensch T.K."/>
            <person name="Hirokawa N."/>
            <person name="Hill D."/>
            <person name="Huminiecki L."/>
            <person name="Iacono M."/>
            <person name="Ikeo K."/>
            <person name="Iwama A."/>
            <person name="Ishikawa T."/>
            <person name="Jakt M."/>
            <person name="Kanapin A."/>
            <person name="Katoh M."/>
            <person name="Kawasawa Y."/>
            <person name="Kelso J."/>
            <person name="Kitamura H."/>
            <person name="Kitano H."/>
            <person name="Kollias G."/>
            <person name="Krishnan S.P."/>
            <person name="Kruger A."/>
            <person name="Kummerfeld S.K."/>
            <person name="Kurochkin I.V."/>
            <person name="Lareau L.F."/>
            <person name="Lazarevic D."/>
            <person name="Lipovich L."/>
            <person name="Liu J."/>
            <person name="Liuni S."/>
            <person name="McWilliam S."/>
            <person name="Madan Babu M."/>
            <person name="Madera M."/>
            <person name="Marchionni L."/>
            <person name="Matsuda H."/>
            <person name="Matsuzawa S."/>
            <person name="Miki H."/>
            <person name="Mignone F."/>
            <person name="Miyake S."/>
            <person name="Morris K."/>
            <person name="Mottagui-Tabar S."/>
            <person name="Mulder N."/>
            <person name="Nakano N."/>
            <person name="Nakauchi H."/>
            <person name="Ng P."/>
            <person name="Nilsson R."/>
            <person name="Nishiguchi S."/>
            <person name="Nishikawa S."/>
            <person name="Nori F."/>
            <person name="Ohara O."/>
            <person name="Okazaki Y."/>
            <person name="Orlando V."/>
            <person name="Pang K.C."/>
            <person name="Pavan W.J."/>
            <person name="Pavesi G."/>
            <person name="Pesole G."/>
            <person name="Petrovsky N."/>
            <person name="Piazza S."/>
            <person name="Reed J."/>
            <person name="Reid J.F."/>
            <person name="Ring B.Z."/>
            <person name="Ringwald M."/>
            <person name="Rost B."/>
            <person name="Ruan Y."/>
            <person name="Salzberg S.L."/>
            <person name="Sandelin A."/>
            <person name="Schneider C."/>
            <person name="Schoenbach C."/>
            <person name="Sekiguchi K."/>
            <person name="Semple C.A."/>
            <person name="Seno S."/>
            <person name="Sessa L."/>
            <person name="Sheng Y."/>
            <person name="Shibata Y."/>
            <person name="Shimada H."/>
            <person name="Shimada K."/>
            <person name="Silva D."/>
            <person name="Sinclair B."/>
            <person name="Sperling S."/>
            <person name="Stupka E."/>
            <person name="Sugiura K."/>
            <person name="Sultana R."/>
            <person name="Takenaka Y."/>
            <person name="Taki K."/>
            <person name="Tammoja K."/>
            <person name="Tan S.L."/>
            <person name="Tang S."/>
            <person name="Taylor M.S."/>
            <person name="Tegner J."/>
            <person name="Teichmann S.A."/>
            <person name="Ueda H.R."/>
            <person name="van Nimwegen E."/>
            <person name="Verardo R."/>
            <person name="Wei C.L."/>
            <person name="Yagi K."/>
            <person name="Yamanishi H."/>
            <person name="Zabarovsky E."/>
            <person name="Zhu S."/>
            <person name="Zimmer A."/>
            <person name="Hide W."/>
            <person name="Bult C."/>
            <person name="Grimmond S.M."/>
            <person name="Teasdale R.D."/>
            <person name="Liu E.T."/>
            <person name="Brusic V."/>
            <person name="Quackenbush J."/>
            <person name="Wahlestedt C."/>
            <person name="Mattick J.S."/>
            <person name="Hume D.A."/>
            <person name="Kai C."/>
            <person name="Sasaki D."/>
            <person name="Tomaru Y."/>
            <person name="Fukuda S."/>
            <person name="Kanamori-Katayama M."/>
            <person name="Suzuki M."/>
            <person name="Aoki J."/>
            <person name="Arakawa T."/>
            <person name="Iida J."/>
            <person name="Imamura K."/>
            <person name="Itoh M."/>
            <person name="Kato T."/>
            <person name="Kawaji H."/>
            <person name="Kawagashira N."/>
            <person name="Kawashima T."/>
            <person name="Kojima M."/>
            <person name="Kondo S."/>
            <person name="Konno H."/>
            <person name="Nakano K."/>
            <person name="Ninomiya N."/>
            <person name="Nishio T."/>
            <person name="Okada M."/>
            <person name="Plessy C."/>
            <person name="Shibata K."/>
            <person name="Shiraki T."/>
            <person name="Suzuki S."/>
            <person name="Tagami M."/>
            <person name="Waki K."/>
            <person name="Watahiki A."/>
            <person name="Okamura-Oho Y."/>
            <person name="Suzuki H."/>
            <person name="Kawai J."/>
            <person name="Hayashizaki Y."/>
        </authorList>
    </citation>
    <scope>NUCLEOTIDE SEQUENCE [LARGE SCALE MRNA] (ISOFORMS 1; 2 AND 3)</scope>
    <source>
        <strain>C57BL/6J</strain>
        <tissue>Bone marrow</tissue>
        <tissue>Embryonic stem cell</tissue>
        <tissue>Testis</tissue>
    </source>
</reference>
<reference key="2">
    <citation type="journal article" date="2004" name="Genome Res.">
        <title>The status, quality, and expansion of the NIH full-length cDNA project: the Mammalian Gene Collection (MGC).</title>
        <authorList>
            <consortium name="The MGC Project Team"/>
        </authorList>
    </citation>
    <scope>NUCLEOTIDE SEQUENCE [LARGE SCALE MRNA] (ISOFORM 1)</scope>
</reference>
<reference key="3">
    <citation type="journal article" date="2010" name="Cell">
        <title>A tissue-specific atlas of mouse protein phosphorylation and expression.</title>
        <authorList>
            <person name="Huttlin E.L."/>
            <person name="Jedrychowski M.P."/>
            <person name="Elias J.E."/>
            <person name="Goswami T."/>
            <person name="Rad R."/>
            <person name="Beausoleil S.A."/>
            <person name="Villen J."/>
            <person name="Haas W."/>
            <person name="Sowa M.E."/>
            <person name="Gygi S.P."/>
        </authorList>
    </citation>
    <scope>IDENTIFICATION BY MASS SPECTROMETRY [LARGE SCALE ANALYSIS]</scope>
    <source>
        <tissue>Spleen</tissue>
        <tissue>Testis</tissue>
    </source>
</reference>
<evidence type="ECO:0000250" key="1"/>
<evidence type="ECO:0000250" key="2">
    <source>
        <dbReference type="UniProtKB" id="Q8NBT2"/>
    </source>
</evidence>
<evidence type="ECO:0000255" key="3"/>
<evidence type="ECO:0000303" key="4">
    <source>
    </source>
</evidence>
<evidence type="ECO:0000305" key="5"/>
<sequence length="201" mass="23416">MAAFRDMVEVSNWLLSLLGANRAEAQQRRLLGSYEQMMERLLEMQDGAYRQLRETLAVEEEVAQSLLELKECTRQGDTELQQLEVELQRTSKEDTCVQARLRQLITELQELREMEEELQRQERDVDEDNTVTIPSAVYVAHLYHQISKIQWDYECEPGMIKGIHHGPTVAQPIHLDSAQLSPKFISDYLWSLVDTTWEPEP</sequence>
<comment type="function">
    <text evidence="2">Acts as a component of the essential kinetochore-associated NDC80 complex, which is required for chromosome segregation and spindle checkpoint activity. Required for kinetochore integrity and the organization of stable microtubule binding sites in the outer plate of the kinetochore. The NDC80 complex synergistically enhances the affinity of the SKA1 complex for microtubules and may allow the NDC80 complex to track depolymerizing microtubules.</text>
</comment>
<comment type="subunit">
    <text evidence="1">Component of the NDC80 complex, which consists of NDC80/HEC1, CDCA1, SPBC24 and SPBC25. The NDC80 complex is formed by two subcomplexes composed of NDC80/HEC1-CDCA1 and SPBC24-SPBC25. Each subcomplex is formed by parallel interactions through the coiled-coil domains of individual subunits. Formation of a tetrameric complex is mediated by interactions between the C-terminal regions of both subunits of the NDC80/HEC1-CDCA1 subcomplex and the N-terminal regions of both subunits of the SPBC24-SPBC25 complex. The tetrameric NDC80 complex has an elongated rod-like structure with globular domains at either end (By similarity).</text>
</comment>
<comment type="subcellular location">
    <subcellularLocation>
        <location evidence="2">Nucleus</location>
    </subcellularLocation>
    <subcellularLocation>
        <location evidence="2">Chromosome</location>
        <location evidence="2">Centromere</location>
        <location evidence="2">Kinetochore</location>
    </subcellularLocation>
    <text evidence="2">Localizes to kinetochores from late prophase to anaphase. Localizes specifically to the outer plate of the kinetochore.</text>
</comment>
<comment type="alternative products">
    <event type="alternative splicing"/>
    <isoform>
        <id>Q9D083-1</id>
        <name>1</name>
        <sequence type="displayed"/>
    </isoform>
    <isoform>
        <id>Q9D083-2</id>
        <name>2</name>
        <sequence type="described" ref="VSP_020516 VSP_020517"/>
    </isoform>
    <isoform>
        <id>Q9D083-3</id>
        <name>3</name>
        <sequence type="described" ref="VSP_020515"/>
    </isoform>
</comment>
<comment type="similarity">
    <text evidence="5">Belongs to the SPC24 family.</text>
</comment>
<dbReference type="EMBL" id="AK011728">
    <property type="protein sequence ID" value="BAB27804.1"/>
    <property type="molecule type" value="mRNA"/>
</dbReference>
<dbReference type="EMBL" id="AK031680">
    <property type="protein sequence ID" value="BAC27510.1"/>
    <property type="molecule type" value="mRNA"/>
</dbReference>
<dbReference type="EMBL" id="AK075950">
    <property type="protein sequence ID" value="BAC36077.1"/>
    <property type="molecule type" value="mRNA"/>
</dbReference>
<dbReference type="EMBL" id="AK153185">
    <property type="protein sequence ID" value="BAE31786.1"/>
    <property type="molecule type" value="mRNA"/>
</dbReference>
<dbReference type="EMBL" id="AK167877">
    <property type="protein sequence ID" value="BAE39891.1"/>
    <property type="molecule type" value="mRNA"/>
</dbReference>
<dbReference type="EMBL" id="BC086683">
    <property type="protein sequence ID" value="AAH86683.1"/>
    <property type="molecule type" value="mRNA"/>
</dbReference>
<dbReference type="EMBL" id="BC116238">
    <property type="protein sequence ID" value="AAI16239.1"/>
    <property type="molecule type" value="mRNA"/>
</dbReference>
<dbReference type="CCDS" id="CCDS40554.1">
    <molecule id="Q9D083-1"/>
</dbReference>
<dbReference type="CCDS" id="CCDS90517.1">
    <molecule id="Q9D083-2"/>
</dbReference>
<dbReference type="RefSeq" id="NP_080558.1">
    <molecule id="Q9D083-1"/>
    <property type="nucleotide sequence ID" value="NM_026282.6"/>
</dbReference>
<dbReference type="SMR" id="Q9D083"/>
<dbReference type="ComplexPortal" id="CPX-551">
    <property type="entry name" value="Ndc80 complex"/>
</dbReference>
<dbReference type="FunCoup" id="Q9D083">
    <property type="interactions" value="607"/>
</dbReference>
<dbReference type="IntAct" id="Q9D083">
    <property type="interactions" value="1"/>
</dbReference>
<dbReference type="MINT" id="Q9D083"/>
<dbReference type="STRING" id="10090.ENSMUSP00000096541"/>
<dbReference type="iPTMnet" id="Q9D083"/>
<dbReference type="PhosphoSitePlus" id="Q9D083"/>
<dbReference type="PaxDb" id="10090-ENSMUSP00000096541"/>
<dbReference type="PeptideAtlas" id="Q9D083"/>
<dbReference type="ProteomicsDB" id="263316">
    <molecule id="Q9D083-1"/>
</dbReference>
<dbReference type="ProteomicsDB" id="263317">
    <molecule id="Q9D083-2"/>
</dbReference>
<dbReference type="ProteomicsDB" id="263318">
    <molecule id="Q9D083-3"/>
</dbReference>
<dbReference type="Pumba" id="Q9D083"/>
<dbReference type="Antibodypedia" id="53808">
    <property type="antibodies" value="75 antibodies from 19 providers"/>
</dbReference>
<dbReference type="DNASU" id="67629"/>
<dbReference type="Ensembl" id="ENSMUST00000098942.6">
    <molecule id="Q9D083-1"/>
    <property type="protein sequence ID" value="ENSMUSP00000096541.5"/>
    <property type="gene ID" value="ENSMUSG00000074476.7"/>
</dbReference>
<dbReference type="Ensembl" id="ENSMUST00000217382.2">
    <molecule id="Q9D083-3"/>
    <property type="protein sequence ID" value="ENSMUSP00000150475.2"/>
    <property type="gene ID" value="ENSMUSG00000074476.7"/>
</dbReference>
<dbReference type="GeneID" id="67629"/>
<dbReference type="KEGG" id="mmu:67629"/>
<dbReference type="UCSC" id="uc009oml.1">
    <molecule id="Q9D083-1"/>
    <property type="organism name" value="mouse"/>
</dbReference>
<dbReference type="AGR" id="MGI:1914879"/>
<dbReference type="CTD" id="147841"/>
<dbReference type="MGI" id="MGI:1914879">
    <property type="gene designation" value="Spc24"/>
</dbReference>
<dbReference type="VEuPathDB" id="HostDB:ENSMUSG00000074476"/>
<dbReference type="eggNOG" id="ENOG502S26V">
    <property type="taxonomic scope" value="Eukaryota"/>
</dbReference>
<dbReference type="GeneTree" id="ENSGT00390000005584"/>
<dbReference type="HOGENOM" id="CLU_119584_0_0_1"/>
<dbReference type="InParanoid" id="Q9D083"/>
<dbReference type="OMA" id="DQLWDFV"/>
<dbReference type="OrthoDB" id="6432863at2759"/>
<dbReference type="PhylomeDB" id="Q9D083"/>
<dbReference type="TreeFam" id="TF333217"/>
<dbReference type="Reactome" id="R-MMU-141444">
    <property type="pathway name" value="Amplification of signal from unattached kinetochores via a MAD2 inhibitory signal"/>
</dbReference>
<dbReference type="Reactome" id="R-MMU-2467813">
    <property type="pathway name" value="Separation of Sister Chromatids"/>
</dbReference>
<dbReference type="Reactome" id="R-MMU-2500257">
    <property type="pathway name" value="Resolution of Sister Chromatid Cohesion"/>
</dbReference>
<dbReference type="Reactome" id="R-MMU-5663220">
    <property type="pathway name" value="RHO GTPases Activate Formins"/>
</dbReference>
<dbReference type="Reactome" id="R-MMU-68877">
    <property type="pathway name" value="Mitotic Prometaphase"/>
</dbReference>
<dbReference type="Reactome" id="R-MMU-9648025">
    <property type="pathway name" value="EML4 and NUDC in mitotic spindle formation"/>
</dbReference>
<dbReference type="BioGRID-ORCS" id="67629">
    <property type="hits" value="28 hits in 76 CRISPR screens"/>
</dbReference>
<dbReference type="ChiTaRS" id="Spc24">
    <property type="organism name" value="mouse"/>
</dbReference>
<dbReference type="PRO" id="PR:Q9D083"/>
<dbReference type="Proteomes" id="UP000000589">
    <property type="component" value="Chromosome 9"/>
</dbReference>
<dbReference type="RNAct" id="Q9D083">
    <property type="molecule type" value="protein"/>
</dbReference>
<dbReference type="Bgee" id="ENSMUSG00000074476">
    <property type="expression patterns" value="Expressed in manus and 167 other cell types or tissues"/>
</dbReference>
<dbReference type="ExpressionAtlas" id="Q9D083">
    <property type="expression patterns" value="baseline and differential"/>
</dbReference>
<dbReference type="GO" id="GO:0000776">
    <property type="term" value="C:kinetochore"/>
    <property type="evidence" value="ECO:0000266"/>
    <property type="project" value="ComplexPortal"/>
</dbReference>
<dbReference type="GO" id="GO:0031262">
    <property type="term" value="C:Ndc80 complex"/>
    <property type="evidence" value="ECO:0000250"/>
    <property type="project" value="UniProtKB"/>
</dbReference>
<dbReference type="GO" id="GO:0005730">
    <property type="term" value="C:nucleolus"/>
    <property type="evidence" value="ECO:0007669"/>
    <property type="project" value="Ensembl"/>
</dbReference>
<dbReference type="GO" id="GO:0005654">
    <property type="term" value="C:nucleoplasm"/>
    <property type="evidence" value="ECO:0007669"/>
    <property type="project" value="Ensembl"/>
</dbReference>
<dbReference type="GO" id="GO:0008608">
    <property type="term" value="P:attachment of spindle microtubules to kinetochore"/>
    <property type="evidence" value="ECO:0000266"/>
    <property type="project" value="ComplexPortal"/>
</dbReference>
<dbReference type="GO" id="GO:0051301">
    <property type="term" value="P:cell division"/>
    <property type="evidence" value="ECO:0007669"/>
    <property type="project" value="UniProtKB-KW"/>
</dbReference>
<dbReference type="GO" id="GO:0007059">
    <property type="term" value="P:chromosome segregation"/>
    <property type="evidence" value="ECO:0000303"/>
    <property type="project" value="ComplexPortal"/>
</dbReference>
<dbReference type="GO" id="GO:0007094">
    <property type="term" value="P:mitotic spindle assembly checkpoint signaling"/>
    <property type="evidence" value="ECO:0000303"/>
    <property type="project" value="ComplexPortal"/>
</dbReference>
<dbReference type="CDD" id="cd11565">
    <property type="entry name" value="RWD_Spc24"/>
    <property type="match status" value="1"/>
</dbReference>
<dbReference type="FunFam" id="3.30.160.570:FF:000001">
    <property type="entry name" value="SPC24, NDC80 kinetochore complex component"/>
    <property type="match status" value="1"/>
</dbReference>
<dbReference type="Gene3D" id="3.30.160.570">
    <property type="entry name" value="Ncd80 complex, Spc24 subunit"/>
    <property type="match status" value="1"/>
</dbReference>
<dbReference type="InterPro" id="IPR013252">
    <property type="entry name" value="Ndc80_Spc24"/>
</dbReference>
<dbReference type="PANTHER" id="PTHR22142">
    <property type="match status" value="1"/>
</dbReference>
<dbReference type="PANTHER" id="PTHR22142:SF2">
    <property type="entry name" value="KINETOCHORE PROTEIN SPC24"/>
    <property type="match status" value="1"/>
</dbReference>
<dbReference type="Pfam" id="PF08286">
    <property type="entry name" value="Spc24"/>
    <property type="match status" value="1"/>
</dbReference>
<accession>Q9D083</accession>
<accession>Q3TIF5</accession>
<accession>Q8CD13</accession>
<name>SPC24_MOUSE</name>
<gene>
    <name type="primary">Spc24</name>
    <name type="synonym">Spbc24</name>
</gene>
<keyword id="KW-0025">Alternative splicing</keyword>
<keyword id="KW-0131">Cell cycle</keyword>
<keyword id="KW-0132">Cell division</keyword>
<keyword id="KW-0137">Centromere</keyword>
<keyword id="KW-0158">Chromosome</keyword>
<keyword id="KW-0175">Coiled coil</keyword>
<keyword id="KW-0995">Kinetochore</keyword>
<keyword id="KW-0498">Mitosis</keyword>
<keyword id="KW-0539">Nucleus</keyword>
<keyword id="KW-0597">Phosphoprotein</keyword>
<keyword id="KW-1185">Reference proteome</keyword>
<feature type="chain" id="PRO_0000249560" description="Kinetochore protein Spc24">
    <location>
        <begin position="1"/>
        <end position="201"/>
    </location>
</feature>
<feature type="region of interest" description="Interaction with the N-terminus of SPBC25" evidence="1">
    <location>
        <begin position="1"/>
        <end position="131"/>
    </location>
</feature>
<feature type="region of interest" description="Interaction with the NDC80-CDCA1 subcomplex" evidence="1">
    <location>
        <begin position="1"/>
        <end position="69"/>
    </location>
</feature>
<feature type="region of interest" description="Interaction with the C-terminus of SPBC25" evidence="1">
    <location>
        <begin position="132"/>
        <end position="197"/>
    </location>
</feature>
<feature type="coiled-coil region" evidence="3">
    <location>
        <begin position="21"/>
        <end position="132"/>
    </location>
</feature>
<feature type="modified residue" description="Phosphoserine" evidence="2">
    <location>
        <position position="11"/>
    </location>
</feature>
<feature type="splice variant" id="VSP_020515" description="In isoform 3." evidence="4">
    <location>
        <begin position="138"/>
        <end position="201"/>
    </location>
</feature>
<feature type="splice variant" id="VSP_020516" description="In isoform 2." evidence="4">
    <original>YVAHLYHQISKIQWDYECEPGMI</original>
    <variation>PPRPHSGPARPLGQCTALAEVHQ</variation>
    <location>
        <begin position="138"/>
        <end position="160"/>
    </location>
</feature>
<feature type="splice variant" id="VSP_020517" description="In isoform 2." evidence="4">
    <location>
        <begin position="161"/>
        <end position="201"/>
    </location>
</feature>
<organism>
    <name type="scientific">Mus musculus</name>
    <name type="common">Mouse</name>
    <dbReference type="NCBI Taxonomy" id="10090"/>
    <lineage>
        <taxon>Eukaryota</taxon>
        <taxon>Metazoa</taxon>
        <taxon>Chordata</taxon>
        <taxon>Craniata</taxon>
        <taxon>Vertebrata</taxon>
        <taxon>Euteleostomi</taxon>
        <taxon>Mammalia</taxon>
        <taxon>Eutheria</taxon>
        <taxon>Euarchontoglires</taxon>
        <taxon>Glires</taxon>
        <taxon>Rodentia</taxon>
        <taxon>Myomorpha</taxon>
        <taxon>Muroidea</taxon>
        <taxon>Muridae</taxon>
        <taxon>Murinae</taxon>
        <taxon>Mus</taxon>
        <taxon>Mus</taxon>
    </lineage>
</organism>
<protein>
    <recommendedName>
        <fullName>Kinetochore protein Spc24</fullName>
    </recommendedName>
</protein>
<proteinExistence type="evidence at protein level"/>